<comment type="function">
    <text evidence="1">Catalyzes the dephosphorylation of undecaprenyl diphosphate (UPP). Confers resistance to bacitracin.</text>
</comment>
<comment type="catalytic activity">
    <reaction evidence="1">
        <text>di-trans,octa-cis-undecaprenyl diphosphate + H2O = di-trans,octa-cis-undecaprenyl phosphate + phosphate + H(+)</text>
        <dbReference type="Rhea" id="RHEA:28094"/>
        <dbReference type="ChEBI" id="CHEBI:15377"/>
        <dbReference type="ChEBI" id="CHEBI:15378"/>
        <dbReference type="ChEBI" id="CHEBI:43474"/>
        <dbReference type="ChEBI" id="CHEBI:58405"/>
        <dbReference type="ChEBI" id="CHEBI:60392"/>
        <dbReference type="EC" id="3.6.1.27"/>
    </reaction>
</comment>
<comment type="subcellular location">
    <subcellularLocation>
        <location evidence="1">Cell membrane</location>
        <topology evidence="1">Multi-pass membrane protein</topology>
    </subcellularLocation>
</comment>
<comment type="miscellaneous">
    <text>Bacitracin is thought to be involved in the inhibition of peptidoglycan synthesis by sequestering undecaprenyl diphosphate, thereby reducing the pool of lipid carrier available.</text>
</comment>
<comment type="similarity">
    <text evidence="1">Belongs to the UppP family.</text>
</comment>
<gene>
    <name evidence="1" type="primary">uppP2</name>
    <name type="synonym">bacA2</name>
    <name type="synonym">upk2</name>
    <name type="ordered locus">CA_C0963</name>
</gene>
<keyword id="KW-0046">Antibiotic resistance</keyword>
<keyword id="KW-1003">Cell membrane</keyword>
<keyword id="KW-0133">Cell shape</keyword>
<keyword id="KW-0961">Cell wall biogenesis/degradation</keyword>
<keyword id="KW-0378">Hydrolase</keyword>
<keyword id="KW-0472">Membrane</keyword>
<keyword id="KW-0573">Peptidoglycan synthesis</keyword>
<keyword id="KW-1185">Reference proteome</keyword>
<keyword id="KW-0812">Transmembrane</keyword>
<keyword id="KW-1133">Transmembrane helix</keyword>
<sequence length="307" mass="33640">MYTNLIFIFKIILEGIIEGVTEFLPVSSTGHMIILGSIIGFKEGAKPVSLYGAEYIHMFEIIIQLGAILAIVVLYWDKIFSALKPSNLFPSMKEHEKSGIGVVGEFFVKGYNTMPGFKFWTNIVVACIPAIVIGLPFQKKIDKLLFFPAPVAAALMVGAVWMIFAENKYRKRAKIKSVDEITIKQAIVIGCFQCLALWPGMSRSASTIIGAWIVGVATVAGAEFSFFLAIPMMLGASLLFLIKNSVVLSSVQILGLAVGFIVAFIVALVVVDRFISFLKKKPMRIFAVYRLAIGIIVLVLGFTKVIS</sequence>
<dbReference type="EC" id="3.6.1.27" evidence="1"/>
<dbReference type="EMBL" id="AE001437">
    <property type="protein sequence ID" value="AAK78939.1"/>
    <property type="molecule type" value="Genomic_DNA"/>
</dbReference>
<dbReference type="PIR" id="H97018">
    <property type="entry name" value="H97018"/>
</dbReference>
<dbReference type="RefSeq" id="NP_347599.1">
    <property type="nucleotide sequence ID" value="NC_003030.1"/>
</dbReference>
<dbReference type="RefSeq" id="WP_010964281.1">
    <property type="nucleotide sequence ID" value="NC_003030.1"/>
</dbReference>
<dbReference type="SMR" id="Q97KF6"/>
<dbReference type="STRING" id="272562.CA_C0963"/>
<dbReference type="KEGG" id="cac:CA_C0963"/>
<dbReference type="PATRIC" id="fig|272562.8.peg.1172"/>
<dbReference type="eggNOG" id="COG1968">
    <property type="taxonomic scope" value="Bacteria"/>
</dbReference>
<dbReference type="HOGENOM" id="CLU_060296_2_0_9"/>
<dbReference type="OrthoDB" id="9808289at2"/>
<dbReference type="Proteomes" id="UP000000814">
    <property type="component" value="Chromosome"/>
</dbReference>
<dbReference type="GO" id="GO:0005886">
    <property type="term" value="C:plasma membrane"/>
    <property type="evidence" value="ECO:0007669"/>
    <property type="project" value="UniProtKB-SubCell"/>
</dbReference>
<dbReference type="GO" id="GO:0050380">
    <property type="term" value="F:undecaprenyl-diphosphatase activity"/>
    <property type="evidence" value="ECO:0007669"/>
    <property type="project" value="UniProtKB-UniRule"/>
</dbReference>
<dbReference type="GO" id="GO:0071555">
    <property type="term" value="P:cell wall organization"/>
    <property type="evidence" value="ECO:0007669"/>
    <property type="project" value="UniProtKB-KW"/>
</dbReference>
<dbReference type="GO" id="GO:0009252">
    <property type="term" value="P:peptidoglycan biosynthetic process"/>
    <property type="evidence" value="ECO:0007669"/>
    <property type="project" value="UniProtKB-KW"/>
</dbReference>
<dbReference type="GO" id="GO:0008360">
    <property type="term" value="P:regulation of cell shape"/>
    <property type="evidence" value="ECO:0007669"/>
    <property type="project" value="UniProtKB-KW"/>
</dbReference>
<dbReference type="GO" id="GO:0046677">
    <property type="term" value="P:response to antibiotic"/>
    <property type="evidence" value="ECO:0007669"/>
    <property type="project" value="UniProtKB-UniRule"/>
</dbReference>
<dbReference type="HAMAP" id="MF_01006">
    <property type="entry name" value="Undec_diphosphatase"/>
    <property type="match status" value="1"/>
</dbReference>
<dbReference type="InterPro" id="IPR003824">
    <property type="entry name" value="UppP"/>
</dbReference>
<dbReference type="NCBIfam" id="NF001390">
    <property type="entry name" value="PRK00281.1-4"/>
    <property type="match status" value="1"/>
</dbReference>
<dbReference type="NCBIfam" id="TIGR00753">
    <property type="entry name" value="undec_PP_bacA"/>
    <property type="match status" value="1"/>
</dbReference>
<dbReference type="PANTHER" id="PTHR30622">
    <property type="entry name" value="UNDECAPRENYL-DIPHOSPHATASE"/>
    <property type="match status" value="1"/>
</dbReference>
<dbReference type="PANTHER" id="PTHR30622:SF3">
    <property type="entry name" value="UNDECAPRENYL-DIPHOSPHATASE"/>
    <property type="match status" value="1"/>
</dbReference>
<dbReference type="Pfam" id="PF02673">
    <property type="entry name" value="BacA"/>
    <property type="match status" value="1"/>
</dbReference>
<feature type="chain" id="PRO_0000151135" description="Undecaprenyl-diphosphatase 2">
    <location>
        <begin position="1"/>
        <end position="307"/>
    </location>
</feature>
<feature type="transmembrane region" description="Helical" evidence="1">
    <location>
        <begin position="19"/>
        <end position="41"/>
    </location>
</feature>
<feature type="transmembrane region" description="Helical" evidence="1">
    <location>
        <begin position="56"/>
        <end position="76"/>
    </location>
</feature>
<feature type="transmembrane region" description="Helical" evidence="1">
    <location>
        <begin position="117"/>
        <end position="137"/>
    </location>
</feature>
<feature type="transmembrane region" description="Helical" evidence="1">
    <location>
        <begin position="144"/>
        <end position="164"/>
    </location>
</feature>
<feature type="transmembrane region" description="Helical" evidence="1">
    <location>
        <begin position="208"/>
        <end position="228"/>
    </location>
</feature>
<feature type="transmembrane region" description="Helical" evidence="1">
    <location>
        <begin position="229"/>
        <end position="249"/>
    </location>
</feature>
<feature type="transmembrane region" description="Helical" evidence="1">
    <location>
        <begin position="251"/>
        <end position="271"/>
    </location>
</feature>
<feature type="transmembrane region" description="Helical" evidence="1">
    <location>
        <begin position="285"/>
        <end position="305"/>
    </location>
</feature>
<proteinExistence type="inferred from homology"/>
<reference key="1">
    <citation type="journal article" date="2001" name="J. Bacteriol.">
        <title>Genome sequence and comparative analysis of the solvent-producing bacterium Clostridium acetobutylicum.</title>
        <authorList>
            <person name="Noelling J."/>
            <person name="Breton G."/>
            <person name="Omelchenko M.V."/>
            <person name="Makarova K.S."/>
            <person name="Zeng Q."/>
            <person name="Gibson R."/>
            <person name="Lee H.M."/>
            <person name="Dubois J."/>
            <person name="Qiu D."/>
            <person name="Hitti J."/>
            <person name="Wolf Y.I."/>
            <person name="Tatusov R.L."/>
            <person name="Sabathe F."/>
            <person name="Doucette-Stamm L.A."/>
            <person name="Soucaille P."/>
            <person name="Daly M.J."/>
            <person name="Bennett G.N."/>
            <person name="Koonin E.V."/>
            <person name="Smith D.R."/>
        </authorList>
    </citation>
    <scope>NUCLEOTIDE SEQUENCE [LARGE SCALE GENOMIC DNA]</scope>
    <source>
        <strain>ATCC 824 / DSM 792 / JCM 1419 / IAM 19013 / LMG 5710 / NBRC 13948 / NRRL B-527 / VKM B-1787 / 2291 / W</strain>
    </source>
</reference>
<organism>
    <name type="scientific">Clostridium acetobutylicum (strain ATCC 824 / DSM 792 / JCM 1419 / IAM 19013 / LMG 5710 / NBRC 13948 / NRRL B-527 / VKM B-1787 / 2291 / W)</name>
    <dbReference type="NCBI Taxonomy" id="272562"/>
    <lineage>
        <taxon>Bacteria</taxon>
        <taxon>Bacillati</taxon>
        <taxon>Bacillota</taxon>
        <taxon>Clostridia</taxon>
        <taxon>Eubacteriales</taxon>
        <taxon>Clostridiaceae</taxon>
        <taxon>Clostridium</taxon>
    </lineage>
</organism>
<protein>
    <recommendedName>
        <fullName evidence="1">Undecaprenyl-diphosphatase 2</fullName>
        <ecNumber evidence="1">3.6.1.27</ecNumber>
    </recommendedName>
    <alternativeName>
        <fullName evidence="1">Bacitracin resistance protein 2</fullName>
    </alternativeName>
    <alternativeName>
        <fullName evidence="1">Undecaprenyl pyrophosphate phosphatase 2</fullName>
    </alternativeName>
</protein>
<accession>Q97KF6</accession>
<evidence type="ECO:0000255" key="1">
    <source>
        <dbReference type="HAMAP-Rule" id="MF_01006"/>
    </source>
</evidence>
<name>UPPP2_CLOAB</name>